<evidence type="ECO:0000250" key="1"/>
<evidence type="ECO:0000255" key="2"/>
<evidence type="ECO:0000256" key="3">
    <source>
        <dbReference type="SAM" id="MobiDB-lite"/>
    </source>
</evidence>
<evidence type="ECO:0000269" key="4">
    <source>
    </source>
</evidence>
<evidence type="ECO:0000269" key="5">
    <source>
    </source>
</evidence>
<evidence type="ECO:0000303" key="6">
    <source>
    </source>
</evidence>
<evidence type="ECO:0000305" key="7"/>
<sequence length="358" mass="40785">MDPAAAGIVKEEMLESQQQQRQEDGGAAPRPMEGLHEVGPPPFLTKTYDLVEDPATDGVVSWSRAGNSFVVWDPHVFADLLLPRLFKHNNFSSFVRQLNTYGFRKVDPDRWEFANEGFLRGQRHLLKTIKRRKPPSNAPPSQQQSLTSCLEVGEFGFEEEIDRLKRDKNILITEVVKLRQEQQATKDHVKAMEDRLRAAEQKQVQMMGFLARAMRNPEFFQQLAQQKEKRKELEDAISKKRRRPIDNVPFYDPGETSQTEQLDSPYLFDSGVLNELSEPGIPELENLAVNIQDLGKGKVDEERQNQTNGQAELGDDFWAELLVEDFTGKEEQSELDGKIDGIDELAQQLGYLSSTSPK</sequence>
<accession>Q338B0</accession>
<accession>F4MGV0</accession>
<protein>
    <recommendedName>
        <fullName>Heat stress transcription factor A-2c</fullName>
    </recommendedName>
    <alternativeName>
        <fullName>Heat stress transcription factor 25</fullName>
        <shortName>OsHsf-25</shortName>
    </alternativeName>
    <alternativeName>
        <fullName>Heat stress transcription factor 6</fullName>
        <shortName>OsHSF6</shortName>
        <shortName>rHsf6</shortName>
    </alternativeName>
</protein>
<keyword id="KW-0010">Activator</keyword>
<keyword id="KW-0025">Alternative splicing</keyword>
<keyword id="KW-0175">Coiled coil</keyword>
<keyword id="KW-0963">Cytoplasm</keyword>
<keyword id="KW-0238">DNA-binding</keyword>
<keyword id="KW-0539">Nucleus</keyword>
<keyword id="KW-0597">Phosphoprotein</keyword>
<keyword id="KW-1185">Reference proteome</keyword>
<keyword id="KW-0346">Stress response</keyword>
<keyword id="KW-0804">Transcription</keyword>
<keyword id="KW-0805">Transcription regulation</keyword>
<feature type="chain" id="PRO_0000350823" description="Heat stress transcription factor A-2c">
    <location>
        <begin position="1"/>
        <end position="358"/>
    </location>
</feature>
<feature type="region of interest" description="Disordered" evidence="3">
    <location>
        <begin position="1"/>
        <end position="39"/>
    </location>
</feature>
<feature type="region of interest" description="Hydrophobic repeat HR-A/B">
    <location>
        <begin position="164"/>
        <end position="214"/>
    </location>
</feature>
<feature type="coiled-coil region" evidence="2">
    <location>
        <begin position="156"/>
        <end position="243"/>
    </location>
</feature>
<feature type="short sequence motif" description="Bipartite nuclear localization signal" evidence="2">
    <location>
        <begin position="229"/>
        <end position="243"/>
    </location>
</feature>
<feature type="short sequence motif" description="AHA1">
    <location>
        <begin position="265"/>
        <end position="274"/>
    </location>
</feature>
<feature type="short sequence motif" description="AHA2">
    <location>
        <begin position="315"/>
        <end position="324"/>
    </location>
</feature>
<feature type="short sequence motif" description="Nuclear export signal" evidence="2">
    <location>
        <begin position="345"/>
        <end position="352"/>
    </location>
</feature>
<feature type="splice variant" id="VSP_035443" description="In isoform 2." evidence="6">
    <location>
        <begin position="1"/>
        <end position="100"/>
    </location>
</feature>
<feature type="splice variant" id="VSP_035444" description="In isoform 2." evidence="6">
    <original>Y</original>
    <variation>M</variation>
    <location>
        <position position="101"/>
    </location>
</feature>
<organism>
    <name type="scientific">Oryza sativa subsp. japonica</name>
    <name type="common">Rice</name>
    <dbReference type="NCBI Taxonomy" id="39947"/>
    <lineage>
        <taxon>Eukaryota</taxon>
        <taxon>Viridiplantae</taxon>
        <taxon>Streptophyta</taxon>
        <taxon>Embryophyta</taxon>
        <taxon>Tracheophyta</taxon>
        <taxon>Spermatophyta</taxon>
        <taxon>Magnoliopsida</taxon>
        <taxon>Liliopsida</taxon>
        <taxon>Poales</taxon>
        <taxon>Poaceae</taxon>
        <taxon>BOP clade</taxon>
        <taxon>Oryzoideae</taxon>
        <taxon>Oryzeae</taxon>
        <taxon>Oryzinae</taxon>
        <taxon>Oryza</taxon>
        <taxon>Oryza sativa</taxon>
    </lineage>
</organism>
<dbReference type="EMBL" id="AY344488">
    <property type="protein sequence ID" value="AAQ23060.1"/>
    <property type="molecule type" value="mRNA"/>
</dbReference>
<dbReference type="EMBL" id="DP000086">
    <property type="protein sequence ID" value="AAP53792.1"/>
    <property type="molecule type" value="Genomic_DNA"/>
</dbReference>
<dbReference type="EMBL" id="DP000086">
    <property type="protein sequence ID" value="ABB47624.1"/>
    <property type="molecule type" value="Genomic_DNA"/>
</dbReference>
<dbReference type="EMBL" id="DP000086">
    <property type="protein sequence ID" value="ABB47626.2"/>
    <property type="molecule type" value="Genomic_DNA"/>
</dbReference>
<dbReference type="EMBL" id="AP008216">
    <property type="protein sequence ID" value="BAF26531.1"/>
    <property type="molecule type" value="Genomic_DNA"/>
</dbReference>
<dbReference type="EMBL" id="AP014966">
    <property type="protein sequence ID" value="BAT10875.1"/>
    <property type="molecule type" value="Genomic_DNA"/>
</dbReference>
<dbReference type="EMBL" id="CM000147">
    <property type="protein sequence ID" value="EAZ16095.1"/>
    <property type="molecule type" value="Genomic_DNA"/>
</dbReference>
<dbReference type="EMBL" id="AK072391">
    <property type="status" value="NOT_ANNOTATED_CDS"/>
    <property type="molecule type" value="mRNA"/>
</dbReference>
<dbReference type="SMR" id="Q338B0"/>
<dbReference type="FunCoup" id="Q338B0">
    <property type="interactions" value="21"/>
</dbReference>
<dbReference type="MINT" id="Q338B0"/>
<dbReference type="STRING" id="39947.Q338B0"/>
<dbReference type="PaxDb" id="39947-Q338B0"/>
<dbReference type="EnsemblPlants" id="Os10t0419300-01">
    <molecule id="Q338B0-1"/>
    <property type="protein sequence ID" value="Os10t0419300-01"/>
    <property type="gene ID" value="Os10g0419300"/>
</dbReference>
<dbReference type="Gramene" id="Os10t0419300-01">
    <molecule id="Q338B0-1"/>
    <property type="protein sequence ID" value="Os10t0419300-01"/>
    <property type="gene ID" value="Os10g0419300"/>
</dbReference>
<dbReference type="KEGG" id="dosa:Os10g0419300"/>
<dbReference type="eggNOG" id="KOG0627">
    <property type="taxonomic scope" value="Eukaryota"/>
</dbReference>
<dbReference type="HOGENOM" id="CLU_030308_1_0_1"/>
<dbReference type="InParanoid" id="Q338B0"/>
<dbReference type="OMA" id="DDDPPLM"/>
<dbReference type="Proteomes" id="UP000000763">
    <property type="component" value="Chromosome 10"/>
</dbReference>
<dbReference type="Proteomes" id="UP000007752">
    <property type="component" value="Chromosome 10"/>
</dbReference>
<dbReference type="Proteomes" id="UP000059680">
    <property type="component" value="Chromosome 10"/>
</dbReference>
<dbReference type="ExpressionAtlas" id="Q338B0">
    <property type="expression patterns" value="baseline and differential"/>
</dbReference>
<dbReference type="GO" id="GO:0005737">
    <property type="term" value="C:cytoplasm"/>
    <property type="evidence" value="ECO:0007669"/>
    <property type="project" value="UniProtKB-SubCell"/>
</dbReference>
<dbReference type="GO" id="GO:0005634">
    <property type="term" value="C:nucleus"/>
    <property type="evidence" value="ECO:0000318"/>
    <property type="project" value="GO_Central"/>
</dbReference>
<dbReference type="GO" id="GO:0003700">
    <property type="term" value="F:DNA-binding transcription factor activity"/>
    <property type="evidence" value="ECO:0000318"/>
    <property type="project" value="GO_Central"/>
</dbReference>
<dbReference type="GO" id="GO:0042802">
    <property type="term" value="F:identical protein binding"/>
    <property type="evidence" value="ECO:0000353"/>
    <property type="project" value="IntAct"/>
</dbReference>
<dbReference type="GO" id="GO:0043565">
    <property type="term" value="F:sequence-specific DNA binding"/>
    <property type="evidence" value="ECO:0007669"/>
    <property type="project" value="InterPro"/>
</dbReference>
<dbReference type="GO" id="GO:0034605">
    <property type="term" value="P:cellular response to heat"/>
    <property type="evidence" value="ECO:0000318"/>
    <property type="project" value="GO_Central"/>
</dbReference>
<dbReference type="GO" id="GO:0006357">
    <property type="term" value="P:regulation of transcription by RNA polymerase II"/>
    <property type="evidence" value="ECO:0000318"/>
    <property type="project" value="GO_Central"/>
</dbReference>
<dbReference type="FunFam" id="1.10.10.10:FF:000057">
    <property type="entry name" value="Heat shock transcription factor 1"/>
    <property type="match status" value="1"/>
</dbReference>
<dbReference type="Gene3D" id="1.10.10.10">
    <property type="entry name" value="Winged helix-like DNA-binding domain superfamily/Winged helix DNA-binding domain"/>
    <property type="match status" value="1"/>
</dbReference>
<dbReference type="InterPro" id="IPR000232">
    <property type="entry name" value="HSF_DNA-bd"/>
</dbReference>
<dbReference type="InterPro" id="IPR036388">
    <property type="entry name" value="WH-like_DNA-bd_sf"/>
</dbReference>
<dbReference type="InterPro" id="IPR036390">
    <property type="entry name" value="WH_DNA-bd_sf"/>
</dbReference>
<dbReference type="PANTHER" id="PTHR10015">
    <property type="entry name" value="HEAT SHOCK TRANSCRIPTION FACTOR"/>
    <property type="match status" value="1"/>
</dbReference>
<dbReference type="PANTHER" id="PTHR10015:SF464">
    <property type="entry name" value="HEAT STRESS TRANSCRIPTION FACTOR A-2C"/>
    <property type="match status" value="1"/>
</dbReference>
<dbReference type="Pfam" id="PF00447">
    <property type="entry name" value="HSF_DNA-bind"/>
    <property type="match status" value="1"/>
</dbReference>
<dbReference type="PRINTS" id="PR00056">
    <property type="entry name" value="HSFDOMAIN"/>
</dbReference>
<dbReference type="SMART" id="SM00415">
    <property type="entry name" value="HSF"/>
    <property type="match status" value="1"/>
</dbReference>
<dbReference type="SUPFAM" id="SSF46785">
    <property type="entry name" value="Winged helix' DNA-binding domain"/>
    <property type="match status" value="1"/>
</dbReference>
<dbReference type="PROSITE" id="PS00434">
    <property type="entry name" value="HSF_DOMAIN"/>
    <property type="match status" value="1"/>
</dbReference>
<comment type="function">
    <text evidence="4">Transcriptional activator that specifically binds DNA of heat shock promoter elements (HSE).</text>
</comment>
<comment type="subunit">
    <text evidence="1">Homotrimer.</text>
</comment>
<comment type="interaction">
    <interactant intactId="EBI-7005650">
        <id>Q338B0</id>
    </interactant>
    <interactant intactId="EBI-7005650">
        <id>Q338B0</id>
        <label>HSFA2C</label>
    </interactant>
    <organismsDiffer>false</organismsDiffer>
    <experiments>2</experiments>
</comment>
<comment type="subcellular location">
    <subcellularLocation>
        <location evidence="7">Cytoplasm</location>
    </subcellularLocation>
    <subcellularLocation>
        <location evidence="7">Nucleus</location>
    </subcellularLocation>
</comment>
<comment type="alternative products">
    <event type="alternative splicing"/>
    <isoform>
        <id>Q338B0-1</id>
        <name>1</name>
        <sequence type="displayed"/>
    </isoform>
    <isoform>
        <id>Q338B0-2</id>
        <name>2</name>
        <sequence type="described" ref="VSP_035443 VSP_035444"/>
    </isoform>
</comment>
<comment type="tissue specificity">
    <text evidence="4">Expressed in roots, leaves and immature seeds.</text>
</comment>
<comment type="induction">
    <text evidence="4">By heat stress.</text>
</comment>
<comment type="domain">
    <text evidence="5">The hydrophobic-rich region (HR-A/B) corresponds to the oligomerization domain. AHA motifs are transcriptional activator elements.</text>
</comment>
<comment type="PTM">
    <text evidence="1">Exhibits temperature-dependent phosphorylation.</text>
</comment>
<comment type="similarity">
    <text evidence="7">Belongs to the HSF family. Class A subfamily.</text>
</comment>
<reference key="1">
    <citation type="journal article" date="2005" name="J. Biochem. Mol. Biol.">
        <title>Isolation and characterization of a cDNA encoding two novel heat-shock factor OsHSF6 and OsHSF12 in Oryza sativa L.</title>
        <authorList>
            <person name="Liu J.-G."/>
            <person name="Yao Q.-H."/>
            <person name="Zhang Z."/>
            <person name="Peng R.-H."/>
            <person name="Xiong A.-S."/>
            <person name="Xu F."/>
            <person name="Zhu H."/>
        </authorList>
    </citation>
    <scope>NUCLEOTIDE SEQUENCE [MRNA] (ISOFORM 1)</scope>
    <scope>FUNCTION</scope>
    <scope>TISSUE SPECIFICITY</scope>
    <scope>INDUCTION</scope>
</reference>
<reference key="2">
    <citation type="journal article" date="2003" name="Science">
        <title>In-depth view of structure, activity, and evolution of rice chromosome 10.</title>
        <authorList>
            <person name="Yu Y."/>
            <person name="Rambo T."/>
            <person name="Currie J."/>
            <person name="Saski C."/>
            <person name="Kim H.-R."/>
            <person name="Collura K."/>
            <person name="Thompson S."/>
            <person name="Simmons J."/>
            <person name="Yang T.-J."/>
            <person name="Nah G."/>
            <person name="Patel A.J."/>
            <person name="Thurmond S."/>
            <person name="Henry D."/>
            <person name="Oates R."/>
            <person name="Palmer M."/>
            <person name="Pries G."/>
            <person name="Gibson J."/>
            <person name="Anderson H."/>
            <person name="Paradkar M."/>
            <person name="Crane L."/>
            <person name="Dale J."/>
            <person name="Carver M.B."/>
            <person name="Wood T."/>
            <person name="Frisch D."/>
            <person name="Engler F."/>
            <person name="Soderlund C."/>
            <person name="Palmer L.E."/>
            <person name="Teytelman L."/>
            <person name="Nascimento L."/>
            <person name="De la Bastide M."/>
            <person name="Spiegel L."/>
            <person name="Ware D."/>
            <person name="O'Shaughnessy A."/>
            <person name="Dike S."/>
            <person name="Dedhia N."/>
            <person name="Preston R."/>
            <person name="Huang E."/>
            <person name="Ferraro K."/>
            <person name="Kuit K."/>
            <person name="Miller B."/>
            <person name="Zutavern T."/>
            <person name="Katzenberger F."/>
            <person name="Muller S."/>
            <person name="Balija V."/>
            <person name="Martienssen R.A."/>
            <person name="Stein L."/>
            <person name="Minx P."/>
            <person name="Johnson D."/>
            <person name="Cordum H."/>
            <person name="Mardis E."/>
            <person name="Cheng Z."/>
            <person name="Jiang J."/>
            <person name="Wilson R."/>
            <person name="McCombie W.R."/>
            <person name="Wing R.A."/>
            <person name="Yuan Q."/>
            <person name="Ouyang S."/>
            <person name="Liu J."/>
            <person name="Jones K.M."/>
            <person name="Gansberger K."/>
            <person name="Moffat K."/>
            <person name="Hill J."/>
            <person name="Tsitrin T."/>
            <person name="Overton L."/>
            <person name="Bera J."/>
            <person name="Kim M."/>
            <person name="Jin S."/>
            <person name="Tallon L."/>
            <person name="Ciecko A."/>
            <person name="Pai G."/>
            <person name="Van Aken S."/>
            <person name="Utterback T."/>
            <person name="Reidmuller S."/>
            <person name="Bormann J."/>
            <person name="Feldblyum T."/>
            <person name="Hsiao J."/>
            <person name="Zismann V."/>
            <person name="Blunt S."/>
            <person name="de Vazeille A.R."/>
            <person name="Shaffer T."/>
            <person name="Koo H."/>
            <person name="Suh B."/>
            <person name="Yang Q."/>
            <person name="Haas B."/>
            <person name="Peterson J."/>
            <person name="Pertea M."/>
            <person name="Volfovsky N."/>
            <person name="Wortman J."/>
            <person name="White O."/>
            <person name="Salzberg S.L."/>
            <person name="Fraser C.M."/>
            <person name="Buell C.R."/>
            <person name="Messing J."/>
            <person name="Song R."/>
            <person name="Fuks G."/>
            <person name="Llaca V."/>
            <person name="Kovchak S."/>
            <person name="Young S."/>
            <person name="Bowers J.E."/>
            <person name="Paterson A.H."/>
            <person name="Johns M.A."/>
            <person name="Mao L."/>
            <person name="Pan H."/>
            <person name="Dean R.A."/>
        </authorList>
    </citation>
    <scope>NUCLEOTIDE SEQUENCE [LARGE SCALE GENOMIC DNA]</scope>
    <source>
        <strain>cv. Nipponbare</strain>
    </source>
</reference>
<reference key="3">
    <citation type="journal article" date="2005" name="Nature">
        <title>The map-based sequence of the rice genome.</title>
        <authorList>
            <consortium name="International rice genome sequencing project (IRGSP)"/>
        </authorList>
    </citation>
    <scope>NUCLEOTIDE SEQUENCE [LARGE SCALE GENOMIC DNA]</scope>
    <source>
        <strain>cv. Nipponbare</strain>
    </source>
</reference>
<reference key="4">
    <citation type="journal article" date="2008" name="Nucleic Acids Res.">
        <title>The rice annotation project database (RAP-DB): 2008 update.</title>
        <authorList>
            <consortium name="The rice annotation project (RAP)"/>
        </authorList>
    </citation>
    <scope>GENOME REANNOTATION</scope>
    <source>
        <strain>cv. Nipponbare</strain>
    </source>
</reference>
<reference key="5">
    <citation type="journal article" date="2013" name="Rice">
        <title>Improvement of the Oryza sativa Nipponbare reference genome using next generation sequence and optical map data.</title>
        <authorList>
            <person name="Kawahara Y."/>
            <person name="de la Bastide M."/>
            <person name="Hamilton J.P."/>
            <person name="Kanamori H."/>
            <person name="McCombie W.R."/>
            <person name="Ouyang S."/>
            <person name="Schwartz D.C."/>
            <person name="Tanaka T."/>
            <person name="Wu J."/>
            <person name="Zhou S."/>
            <person name="Childs K.L."/>
            <person name="Davidson R.M."/>
            <person name="Lin H."/>
            <person name="Quesada-Ocampo L."/>
            <person name="Vaillancourt B."/>
            <person name="Sakai H."/>
            <person name="Lee S.S."/>
            <person name="Kim J."/>
            <person name="Numa H."/>
            <person name="Itoh T."/>
            <person name="Buell C.R."/>
            <person name="Matsumoto T."/>
        </authorList>
    </citation>
    <scope>GENOME REANNOTATION</scope>
    <source>
        <strain>cv. Nipponbare</strain>
    </source>
</reference>
<reference key="6">
    <citation type="journal article" date="2005" name="PLoS Biol.">
        <title>The genomes of Oryza sativa: a history of duplications.</title>
        <authorList>
            <person name="Yu J."/>
            <person name="Wang J."/>
            <person name="Lin W."/>
            <person name="Li S."/>
            <person name="Li H."/>
            <person name="Zhou J."/>
            <person name="Ni P."/>
            <person name="Dong W."/>
            <person name="Hu S."/>
            <person name="Zeng C."/>
            <person name="Zhang J."/>
            <person name="Zhang Y."/>
            <person name="Li R."/>
            <person name="Xu Z."/>
            <person name="Li S."/>
            <person name="Li X."/>
            <person name="Zheng H."/>
            <person name="Cong L."/>
            <person name="Lin L."/>
            <person name="Yin J."/>
            <person name="Geng J."/>
            <person name="Li G."/>
            <person name="Shi J."/>
            <person name="Liu J."/>
            <person name="Lv H."/>
            <person name="Li J."/>
            <person name="Wang J."/>
            <person name="Deng Y."/>
            <person name="Ran L."/>
            <person name="Shi X."/>
            <person name="Wang X."/>
            <person name="Wu Q."/>
            <person name="Li C."/>
            <person name="Ren X."/>
            <person name="Wang J."/>
            <person name="Wang X."/>
            <person name="Li D."/>
            <person name="Liu D."/>
            <person name="Zhang X."/>
            <person name="Ji Z."/>
            <person name="Zhao W."/>
            <person name="Sun Y."/>
            <person name="Zhang Z."/>
            <person name="Bao J."/>
            <person name="Han Y."/>
            <person name="Dong L."/>
            <person name="Ji J."/>
            <person name="Chen P."/>
            <person name="Wu S."/>
            <person name="Liu J."/>
            <person name="Xiao Y."/>
            <person name="Bu D."/>
            <person name="Tan J."/>
            <person name="Yang L."/>
            <person name="Ye C."/>
            <person name="Zhang J."/>
            <person name="Xu J."/>
            <person name="Zhou Y."/>
            <person name="Yu Y."/>
            <person name="Zhang B."/>
            <person name="Zhuang S."/>
            <person name="Wei H."/>
            <person name="Liu B."/>
            <person name="Lei M."/>
            <person name="Yu H."/>
            <person name="Li Y."/>
            <person name="Xu H."/>
            <person name="Wei S."/>
            <person name="He X."/>
            <person name="Fang L."/>
            <person name="Zhang Z."/>
            <person name="Zhang Y."/>
            <person name="Huang X."/>
            <person name="Su Z."/>
            <person name="Tong W."/>
            <person name="Li J."/>
            <person name="Tong Z."/>
            <person name="Li S."/>
            <person name="Ye J."/>
            <person name="Wang L."/>
            <person name="Fang L."/>
            <person name="Lei T."/>
            <person name="Chen C.-S."/>
            <person name="Chen H.-C."/>
            <person name="Xu Z."/>
            <person name="Li H."/>
            <person name="Huang H."/>
            <person name="Zhang F."/>
            <person name="Xu H."/>
            <person name="Li N."/>
            <person name="Zhao C."/>
            <person name="Li S."/>
            <person name="Dong L."/>
            <person name="Huang Y."/>
            <person name="Li L."/>
            <person name="Xi Y."/>
            <person name="Qi Q."/>
            <person name="Li W."/>
            <person name="Zhang B."/>
            <person name="Hu W."/>
            <person name="Zhang Y."/>
            <person name="Tian X."/>
            <person name="Jiao Y."/>
            <person name="Liang X."/>
            <person name="Jin J."/>
            <person name="Gao L."/>
            <person name="Zheng W."/>
            <person name="Hao B."/>
            <person name="Liu S.-M."/>
            <person name="Wang W."/>
            <person name="Yuan L."/>
            <person name="Cao M."/>
            <person name="McDermott J."/>
            <person name="Samudrala R."/>
            <person name="Wang J."/>
            <person name="Wong G.K.-S."/>
            <person name="Yang H."/>
        </authorList>
    </citation>
    <scope>NUCLEOTIDE SEQUENCE [LARGE SCALE GENOMIC DNA]</scope>
    <source>
        <strain>cv. Nipponbare</strain>
    </source>
</reference>
<reference key="7">
    <citation type="journal article" date="2003" name="Science">
        <title>Collection, mapping, and annotation of over 28,000 cDNA clones from japonica rice.</title>
        <authorList>
            <consortium name="The rice full-length cDNA consortium"/>
        </authorList>
    </citation>
    <scope>NUCLEOTIDE SEQUENCE [LARGE SCALE MRNA] (ISOFORM 2)</scope>
    <source>
        <strain>cv. Nipponbare</strain>
    </source>
</reference>
<reference key="8">
    <citation type="journal article" date="2004" name="J. Biosci.">
        <title>Heat stress response in plants: a complex game with chaperones and more than twenty heat stress transcription factors.</title>
        <authorList>
            <person name="Baniwal S.K."/>
            <person name="Bharti K."/>
            <person name="Chan K.Y."/>
            <person name="Fauth M."/>
            <person name="Ganguli A."/>
            <person name="Kotak S."/>
            <person name="Mishra S.K."/>
            <person name="Nover L."/>
            <person name="Port M."/>
            <person name="Scharf K.-D."/>
            <person name="Tripp J."/>
            <person name="Weber C."/>
            <person name="Zielinski D."/>
            <person name="von Koskull-Doering P."/>
        </authorList>
    </citation>
    <scope>GENE FAMILY</scope>
    <scope>NOMENCLATURE</scope>
</reference>
<reference key="9">
    <citation type="journal article" date="2008" name="J. Genet. Genomics">
        <title>Genome-wide analysis of heat shock transcription factor families in rice and Arabidopsis.</title>
        <authorList>
            <person name="Guo J."/>
            <person name="Wu J."/>
            <person name="Ji Q."/>
            <person name="Wang C."/>
            <person name="Luo L."/>
            <person name="Yuan Y."/>
            <person name="Wang Y."/>
            <person name="Wang J."/>
        </authorList>
    </citation>
    <scope>GENE FAMILY</scope>
    <scope>NOMENCLATURE</scope>
    <scope>DOMAIN AHA</scope>
</reference>
<gene>
    <name type="primary">HSFA2C</name>
    <name type="synonym">HSF25</name>
    <name type="synonym">HSF6</name>
    <name type="ordered locus">Os10g0419300</name>
    <name type="ordered locus">LOC_Os10g28340</name>
    <name type="ORF">OsJ_030304</name>
</gene>
<name>HFA2C_ORYSJ</name>
<proteinExistence type="evidence at protein level"/>